<reference key="1">
    <citation type="submission" date="2007-10" db="EMBL/GenBank/DDBJ databases">
        <title>Complete sequence of Caldivirga maquilingensis IC-167.</title>
        <authorList>
            <consortium name="US DOE Joint Genome Institute"/>
            <person name="Copeland A."/>
            <person name="Lucas S."/>
            <person name="Lapidus A."/>
            <person name="Barry K."/>
            <person name="Glavina del Rio T."/>
            <person name="Dalin E."/>
            <person name="Tice H."/>
            <person name="Pitluck S."/>
            <person name="Saunders E."/>
            <person name="Brettin T."/>
            <person name="Bruce D."/>
            <person name="Detter J.C."/>
            <person name="Han C."/>
            <person name="Schmutz J."/>
            <person name="Larimer F."/>
            <person name="Land M."/>
            <person name="Hauser L."/>
            <person name="Kyrpides N."/>
            <person name="Ivanova N."/>
            <person name="Biddle J.F."/>
            <person name="Zhang Z."/>
            <person name="Fitz-Gibbon S.T."/>
            <person name="Lowe T.M."/>
            <person name="Saltikov C."/>
            <person name="House C.H."/>
            <person name="Richardson P."/>
        </authorList>
    </citation>
    <scope>NUCLEOTIDE SEQUENCE [LARGE SCALE GENOMIC DNA]</scope>
    <source>
        <strain>ATCC 700844 / DSM 13496 / JCM 10307 / IC-167</strain>
    </source>
</reference>
<proteinExistence type="inferred from homology"/>
<gene>
    <name evidence="1" type="primary">ilvC</name>
    <name type="ordered locus">Cmaq_1168</name>
</gene>
<sequence length="328" mass="36489">MAKIYRETDADLSELKGKVIAVLGYGIQGRSWALNMRDSGLRVIVGVRPGKSRDLAKEEGFETYDVAEATKMADVVAVLLPDMVQPKVWTSEIGPNLKPGALVIFAHGFNIRYNLIKPPSNIDVTLVAPKAPGKAVRDEYLRGWGVPALVAVHQDYTGKALRRALAVAKANGFTRVGVIETTFAEETETDLIGEQTVLVGGLMELIKKGFETMIELGYQPEVAYFEVLNEAKLIMDLIWERGVYGMLNGVSETARYGGLTVGPYVLDNSVKERMRKAAERVRNGEFAREWLNEYEGGMKNLSRMLNEVKNHRLEVVGEDLRRLMRSGR</sequence>
<name>ILVC_CALMQ</name>
<feature type="chain" id="PRO_1000191023" description="Ketol-acid reductoisomerase (NADP(+))">
    <location>
        <begin position="1"/>
        <end position="328"/>
    </location>
</feature>
<feature type="domain" description="KARI N-terminal Rossmann" evidence="2">
    <location>
        <begin position="2"/>
        <end position="181"/>
    </location>
</feature>
<feature type="domain" description="KARI C-terminal knotted" evidence="3">
    <location>
        <begin position="182"/>
        <end position="327"/>
    </location>
</feature>
<feature type="active site" evidence="1">
    <location>
        <position position="107"/>
    </location>
</feature>
<feature type="binding site" evidence="1">
    <location>
        <begin position="25"/>
        <end position="28"/>
    </location>
    <ligand>
        <name>NADP(+)</name>
        <dbReference type="ChEBI" id="CHEBI:58349"/>
    </ligand>
</feature>
<feature type="binding site" evidence="1">
    <location>
        <position position="48"/>
    </location>
    <ligand>
        <name>NADP(+)</name>
        <dbReference type="ChEBI" id="CHEBI:58349"/>
    </ligand>
</feature>
<feature type="binding site" evidence="1">
    <location>
        <position position="52"/>
    </location>
    <ligand>
        <name>NADP(+)</name>
        <dbReference type="ChEBI" id="CHEBI:58349"/>
    </ligand>
</feature>
<feature type="binding site" evidence="1">
    <location>
        <begin position="82"/>
        <end position="85"/>
    </location>
    <ligand>
        <name>NADP(+)</name>
        <dbReference type="ChEBI" id="CHEBI:58349"/>
    </ligand>
</feature>
<feature type="binding site" evidence="1">
    <location>
        <position position="133"/>
    </location>
    <ligand>
        <name>NADP(+)</name>
        <dbReference type="ChEBI" id="CHEBI:58349"/>
    </ligand>
</feature>
<feature type="binding site" evidence="1">
    <location>
        <position position="190"/>
    </location>
    <ligand>
        <name>Mg(2+)</name>
        <dbReference type="ChEBI" id="CHEBI:18420"/>
        <label>1</label>
    </ligand>
</feature>
<feature type="binding site" evidence="1">
    <location>
        <position position="190"/>
    </location>
    <ligand>
        <name>Mg(2+)</name>
        <dbReference type="ChEBI" id="CHEBI:18420"/>
        <label>2</label>
    </ligand>
</feature>
<feature type="binding site" evidence="1">
    <location>
        <position position="194"/>
    </location>
    <ligand>
        <name>Mg(2+)</name>
        <dbReference type="ChEBI" id="CHEBI:18420"/>
        <label>1</label>
    </ligand>
</feature>
<feature type="binding site" evidence="1">
    <location>
        <position position="226"/>
    </location>
    <ligand>
        <name>Mg(2+)</name>
        <dbReference type="ChEBI" id="CHEBI:18420"/>
        <label>2</label>
    </ligand>
</feature>
<feature type="binding site" evidence="1">
    <location>
        <position position="230"/>
    </location>
    <ligand>
        <name>Mg(2+)</name>
        <dbReference type="ChEBI" id="CHEBI:18420"/>
        <label>2</label>
    </ligand>
</feature>
<feature type="binding site" evidence="1">
    <location>
        <position position="251"/>
    </location>
    <ligand>
        <name>substrate</name>
    </ligand>
</feature>
<evidence type="ECO:0000255" key="1">
    <source>
        <dbReference type="HAMAP-Rule" id="MF_00435"/>
    </source>
</evidence>
<evidence type="ECO:0000255" key="2">
    <source>
        <dbReference type="PROSITE-ProRule" id="PRU01197"/>
    </source>
</evidence>
<evidence type="ECO:0000255" key="3">
    <source>
        <dbReference type="PROSITE-ProRule" id="PRU01198"/>
    </source>
</evidence>
<comment type="function">
    <text evidence="1">Involved in the biosynthesis of branched-chain amino acids (BCAA). Catalyzes an alkyl-migration followed by a ketol-acid reduction of (S)-2-acetolactate (S2AL) to yield (R)-2,3-dihydroxy-isovalerate. In the isomerase reaction, S2AL is rearranged via a Mg-dependent methyl migration to produce 3-hydroxy-3-methyl-2-ketobutyrate (HMKB). In the reductase reaction, this 2-ketoacid undergoes a metal-dependent reduction by NADPH to yield (R)-2,3-dihydroxy-isovalerate.</text>
</comment>
<comment type="catalytic activity">
    <reaction evidence="1">
        <text>(2R)-2,3-dihydroxy-3-methylbutanoate + NADP(+) = (2S)-2-acetolactate + NADPH + H(+)</text>
        <dbReference type="Rhea" id="RHEA:22068"/>
        <dbReference type="ChEBI" id="CHEBI:15378"/>
        <dbReference type="ChEBI" id="CHEBI:49072"/>
        <dbReference type="ChEBI" id="CHEBI:57783"/>
        <dbReference type="ChEBI" id="CHEBI:58349"/>
        <dbReference type="ChEBI" id="CHEBI:58476"/>
        <dbReference type="EC" id="1.1.1.86"/>
    </reaction>
</comment>
<comment type="catalytic activity">
    <reaction evidence="1">
        <text>(2R,3R)-2,3-dihydroxy-3-methylpentanoate + NADP(+) = (S)-2-ethyl-2-hydroxy-3-oxobutanoate + NADPH + H(+)</text>
        <dbReference type="Rhea" id="RHEA:13493"/>
        <dbReference type="ChEBI" id="CHEBI:15378"/>
        <dbReference type="ChEBI" id="CHEBI:49256"/>
        <dbReference type="ChEBI" id="CHEBI:49258"/>
        <dbReference type="ChEBI" id="CHEBI:57783"/>
        <dbReference type="ChEBI" id="CHEBI:58349"/>
        <dbReference type="EC" id="1.1.1.86"/>
    </reaction>
</comment>
<comment type="cofactor">
    <cofactor evidence="1">
        <name>Mg(2+)</name>
        <dbReference type="ChEBI" id="CHEBI:18420"/>
    </cofactor>
    <text evidence="1">Binds 2 magnesium ions per subunit.</text>
</comment>
<comment type="pathway">
    <text evidence="1">Amino-acid biosynthesis; L-isoleucine biosynthesis; L-isoleucine from 2-oxobutanoate: step 2/4.</text>
</comment>
<comment type="pathway">
    <text evidence="1">Amino-acid biosynthesis; L-valine biosynthesis; L-valine from pyruvate: step 2/4.</text>
</comment>
<comment type="similarity">
    <text evidence="1">Belongs to the ketol-acid reductoisomerase family.</text>
</comment>
<dbReference type="EC" id="1.1.1.86" evidence="1"/>
<dbReference type="EMBL" id="CP000852">
    <property type="protein sequence ID" value="ABW01995.1"/>
    <property type="molecule type" value="Genomic_DNA"/>
</dbReference>
<dbReference type="RefSeq" id="WP_012186214.1">
    <property type="nucleotide sequence ID" value="NC_009954.1"/>
</dbReference>
<dbReference type="SMR" id="A8MDY9"/>
<dbReference type="STRING" id="397948.Cmaq_1168"/>
<dbReference type="GeneID" id="5709431"/>
<dbReference type="KEGG" id="cma:Cmaq_1168"/>
<dbReference type="eggNOG" id="arCOG04465">
    <property type="taxonomic scope" value="Archaea"/>
</dbReference>
<dbReference type="HOGENOM" id="CLU_033821_0_1_2"/>
<dbReference type="OrthoDB" id="6064at2157"/>
<dbReference type="UniPathway" id="UPA00047">
    <property type="reaction ID" value="UER00056"/>
</dbReference>
<dbReference type="UniPathway" id="UPA00049">
    <property type="reaction ID" value="UER00060"/>
</dbReference>
<dbReference type="Proteomes" id="UP000001137">
    <property type="component" value="Chromosome"/>
</dbReference>
<dbReference type="GO" id="GO:0004455">
    <property type="term" value="F:ketol-acid reductoisomerase activity"/>
    <property type="evidence" value="ECO:0007669"/>
    <property type="project" value="UniProtKB-UniRule"/>
</dbReference>
<dbReference type="GO" id="GO:0000287">
    <property type="term" value="F:magnesium ion binding"/>
    <property type="evidence" value="ECO:0007669"/>
    <property type="project" value="UniProtKB-UniRule"/>
</dbReference>
<dbReference type="GO" id="GO:0050661">
    <property type="term" value="F:NADP binding"/>
    <property type="evidence" value="ECO:0007669"/>
    <property type="project" value="InterPro"/>
</dbReference>
<dbReference type="GO" id="GO:0009097">
    <property type="term" value="P:isoleucine biosynthetic process"/>
    <property type="evidence" value="ECO:0007669"/>
    <property type="project" value="UniProtKB-UniRule"/>
</dbReference>
<dbReference type="GO" id="GO:0009099">
    <property type="term" value="P:L-valine biosynthetic process"/>
    <property type="evidence" value="ECO:0007669"/>
    <property type="project" value="UniProtKB-UniRule"/>
</dbReference>
<dbReference type="FunFam" id="3.40.50.720:FF:000023">
    <property type="entry name" value="Ketol-acid reductoisomerase (NADP(+))"/>
    <property type="match status" value="1"/>
</dbReference>
<dbReference type="Gene3D" id="6.10.240.10">
    <property type="match status" value="1"/>
</dbReference>
<dbReference type="Gene3D" id="3.40.50.720">
    <property type="entry name" value="NAD(P)-binding Rossmann-like Domain"/>
    <property type="match status" value="1"/>
</dbReference>
<dbReference type="HAMAP" id="MF_00435">
    <property type="entry name" value="IlvC"/>
    <property type="match status" value="1"/>
</dbReference>
<dbReference type="InterPro" id="IPR008927">
    <property type="entry name" value="6-PGluconate_DH-like_C_sf"/>
</dbReference>
<dbReference type="InterPro" id="IPR013023">
    <property type="entry name" value="KARI"/>
</dbReference>
<dbReference type="InterPro" id="IPR000506">
    <property type="entry name" value="KARI_C"/>
</dbReference>
<dbReference type="InterPro" id="IPR013116">
    <property type="entry name" value="KARI_N"/>
</dbReference>
<dbReference type="InterPro" id="IPR014359">
    <property type="entry name" value="KARI_prok"/>
</dbReference>
<dbReference type="InterPro" id="IPR036291">
    <property type="entry name" value="NAD(P)-bd_dom_sf"/>
</dbReference>
<dbReference type="NCBIfam" id="TIGR00465">
    <property type="entry name" value="ilvC"/>
    <property type="match status" value="1"/>
</dbReference>
<dbReference type="NCBIfam" id="NF004017">
    <property type="entry name" value="PRK05479.1"/>
    <property type="match status" value="1"/>
</dbReference>
<dbReference type="PANTHER" id="PTHR21371">
    <property type="entry name" value="KETOL-ACID REDUCTOISOMERASE, MITOCHONDRIAL"/>
    <property type="match status" value="1"/>
</dbReference>
<dbReference type="PANTHER" id="PTHR21371:SF1">
    <property type="entry name" value="KETOL-ACID REDUCTOISOMERASE, MITOCHONDRIAL"/>
    <property type="match status" value="1"/>
</dbReference>
<dbReference type="Pfam" id="PF01450">
    <property type="entry name" value="KARI_C"/>
    <property type="match status" value="1"/>
</dbReference>
<dbReference type="Pfam" id="PF07991">
    <property type="entry name" value="KARI_N"/>
    <property type="match status" value="1"/>
</dbReference>
<dbReference type="PIRSF" id="PIRSF000116">
    <property type="entry name" value="IlvC_gammaproteo"/>
    <property type="match status" value="1"/>
</dbReference>
<dbReference type="SUPFAM" id="SSF48179">
    <property type="entry name" value="6-phosphogluconate dehydrogenase C-terminal domain-like"/>
    <property type="match status" value="1"/>
</dbReference>
<dbReference type="SUPFAM" id="SSF51735">
    <property type="entry name" value="NAD(P)-binding Rossmann-fold domains"/>
    <property type="match status" value="1"/>
</dbReference>
<dbReference type="PROSITE" id="PS51851">
    <property type="entry name" value="KARI_C"/>
    <property type="match status" value="1"/>
</dbReference>
<dbReference type="PROSITE" id="PS51850">
    <property type="entry name" value="KARI_N"/>
    <property type="match status" value="1"/>
</dbReference>
<keyword id="KW-0028">Amino-acid biosynthesis</keyword>
<keyword id="KW-0100">Branched-chain amino acid biosynthesis</keyword>
<keyword id="KW-0460">Magnesium</keyword>
<keyword id="KW-0479">Metal-binding</keyword>
<keyword id="KW-0521">NADP</keyword>
<keyword id="KW-0560">Oxidoreductase</keyword>
<keyword id="KW-1185">Reference proteome</keyword>
<protein>
    <recommendedName>
        <fullName evidence="1">Ketol-acid reductoisomerase (NADP(+))</fullName>
        <shortName evidence="1">KARI</shortName>
        <ecNumber evidence="1">1.1.1.86</ecNumber>
    </recommendedName>
    <alternativeName>
        <fullName evidence="1">Acetohydroxy-acid isomeroreductase</fullName>
        <shortName evidence="1">AHIR</shortName>
    </alternativeName>
    <alternativeName>
        <fullName evidence="1">Alpha-keto-beta-hydroxylacyl reductoisomerase</fullName>
    </alternativeName>
    <alternativeName>
        <fullName evidence="1">Ketol-acid reductoisomerase type 1</fullName>
    </alternativeName>
    <alternativeName>
        <fullName evidence="1">Ketol-acid reductoisomerase type I</fullName>
    </alternativeName>
</protein>
<organism>
    <name type="scientific">Caldivirga maquilingensis (strain ATCC 700844 / DSM 13496 / JCM 10307 / IC-167)</name>
    <dbReference type="NCBI Taxonomy" id="397948"/>
    <lineage>
        <taxon>Archaea</taxon>
        <taxon>Thermoproteota</taxon>
        <taxon>Thermoprotei</taxon>
        <taxon>Thermoproteales</taxon>
        <taxon>Thermoproteaceae</taxon>
        <taxon>Caldivirga</taxon>
    </lineage>
</organism>
<accession>A8MDY9</accession>